<dbReference type="EMBL" id="CU329670">
    <property type="protein sequence ID" value="CAA91499.1"/>
    <property type="molecule type" value="Genomic_DNA"/>
</dbReference>
<dbReference type="EMBL" id="D50609">
    <property type="protein sequence ID" value="BAA09171.1"/>
    <property type="molecule type" value="Genomic_DNA"/>
</dbReference>
<dbReference type="PIR" id="S62535">
    <property type="entry name" value="S62535"/>
</dbReference>
<dbReference type="PIR" id="T43369">
    <property type="entry name" value="T43369"/>
</dbReference>
<dbReference type="RefSeq" id="NP_592894.1">
    <property type="nucleotide sequence ID" value="NM_001018294.2"/>
</dbReference>
<dbReference type="SMR" id="Q09864"/>
<dbReference type="BioGRID" id="279563">
    <property type="interactions" value="12"/>
</dbReference>
<dbReference type="FunCoup" id="Q09864">
    <property type="interactions" value="459"/>
</dbReference>
<dbReference type="IntAct" id="Q09864">
    <property type="interactions" value="2"/>
</dbReference>
<dbReference type="MINT" id="Q09864"/>
<dbReference type="STRING" id="284812.Q09864"/>
<dbReference type="iPTMnet" id="Q09864"/>
<dbReference type="PaxDb" id="4896-SPAC12G12.04.1"/>
<dbReference type="EnsemblFungi" id="SPAC12G12.04.1">
    <property type="protein sequence ID" value="SPAC12G12.04.1:pep"/>
    <property type="gene ID" value="SPAC12G12.04"/>
</dbReference>
<dbReference type="GeneID" id="2543131"/>
<dbReference type="KEGG" id="spo:2543131"/>
<dbReference type="PomBase" id="SPAC12G12.04"/>
<dbReference type="VEuPathDB" id="FungiDB:SPAC12G12.04"/>
<dbReference type="eggNOG" id="KOG0356">
    <property type="taxonomic scope" value="Eukaryota"/>
</dbReference>
<dbReference type="HOGENOM" id="CLU_016503_3_0_1"/>
<dbReference type="InParanoid" id="Q09864"/>
<dbReference type="OMA" id="TDTDKME"/>
<dbReference type="PhylomeDB" id="Q09864"/>
<dbReference type="Reactome" id="R-SPO-1268020">
    <property type="pathway name" value="Mitochondrial protein import"/>
</dbReference>
<dbReference type="Reactome" id="R-SPO-9837999">
    <property type="pathway name" value="Mitochondrial protein degradation"/>
</dbReference>
<dbReference type="PRO" id="PR:Q09864"/>
<dbReference type="Proteomes" id="UP000002485">
    <property type="component" value="Chromosome I"/>
</dbReference>
<dbReference type="GO" id="GO:0005743">
    <property type="term" value="C:mitochondrial inner membrane"/>
    <property type="evidence" value="ECO:0000318"/>
    <property type="project" value="GO_Central"/>
</dbReference>
<dbReference type="GO" id="GO:0005758">
    <property type="term" value="C:mitochondrial intermembrane space"/>
    <property type="evidence" value="ECO:0000314"/>
    <property type="project" value="PomBase"/>
</dbReference>
<dbReference type="GO" id="GO:0005759">
    <property type="term" value="C:mitochondrial matrix"/>
    <property type="evidence" value="ECO:0000314"/>
    <property type="project" value="PomBase"/>
</dbReference>
<dbReference type="GO" id="GO:0042645">
    <property type="term" value="C:mitochondrial nucleoid"/>
    <property type="evidence" value="ECO:0000266"/>
    <property type="project" value="PomBase"/>
</dbReference>
<dbReference type="GO" id="GO:0005739">
    <property type="term" value="C:mitochondrion"/>
    <property type="evidence" value="ECO:0007005"/>
    <property type="project" value="PomBase"/>
</dbReference>
<dbReference type="GO" id="GO:0071014">
    <property type="term" value="C:post-mRNA release spliceosomal complex"/>
    <property type="evidence" value="ECO:0000314"/>
    <property type="project" value="PomBase"/>
</dbReference>
<dbReference type="GO" id="GO:0005524">
    <property type="term" value="F:ATP binding"/>
    <property type="evidence" value="ECO:0000250"/>
    <property type="project" value="PomBase"/>
</dbReference>
<dbReference type="GO" id="GO:0016887">
    <property type="term" value="F:ATP hydrolysis activity"/>
    <property type="evidence" value="ECO:0000305"/>
    <property type="project" value="PomBase"/>
</dbReference>
<dbReference type="GO" id="GO:0140662">
    <property type="term" value="F:ATP-dependent protein folding chaperone"/>
    <property type="evidence" value="ECO:0007669"/>
    <property type="project" value="InterPro"/>
</dbReference>
<dbReference type="GO" id="GO:0044183">
    <property type="term" value="F:protein folding chaperone"/>
    <property type="evidence" value="ECO:0000353"/>
    <property type="project" value="PomBase"/>
</dbReference>
<dbReference type="GO" id="GO:0051087">
    <property type="term" value="F:protein-folding chaperone binding"/>
    <property type="evidence" value="ECO:0000318"/>
    <property type="project" value="GO_Central"/>
</dbReference>
<dbReference type="GO" id="GO:0034514">
    <property type="term" value="P:mitochondrial unfolded protein response"/>
    <property type="evidence" value="ECO:0000318"/>
    <property type="project" value="GO_Central"/>
</dbReference>
<dbReference type="GO" id="GO:0007005">
    <property type="term" value="P:mitochondrion organization"/>
    <property type="evidence" value="ECO:0000318"/>
    <property type="project" value="GO_Central"/>
</dbReference>
<dbReference type="GO" id="GO:0006457">
    <property type="term" value="P:protein folding"/>
    <property type="evidence" value="ECO:0000318"/>
    <property type="project" value="GO_Central"/>
</dbReference>
<dbReference type="GO" id="GO:0045041">
    <property type="term" value="P:protein import into mitochondrial intermembrane space"/>
    <property type="evidence" value="ECO:0000318"/>
    <property type="project" value="GO_Central"/>
</dbReference>
<dbReference type="GO" id="GO:0030150">
    <property type="term" value="P:protein import into mitochondrial matrix"/>
    <property type="evidence" value="ECO:0000266"/>
    <property type="project" value="PomBase"/>
</dbReference>
<dbReference type="GO" id="GO:0042026">
    <property type="term" value="P:protein refolding"/>
    <property type="evidence" value="ECO:0007669"/>
    <property type="project" value="InterPro"/>
</dbReference>
<dbReference type="CDD" id="cd03344">
    <property type="entry name" value="GroEL"/>
    <property type="match status" value="1"/>
</dbReference>
<dbReference type="FunFam" id="1.10.560.10:FF:000001">
    <property type="entry name" value="60 kDa chaperonin"/>
    <property type="match status" value="1"/>
</dbReference>
<dbReference type="FunFam" id="3.50.7.10:FF:000001">
    <property type="entry name" value="60 kDa chaperonin"/>
    <property type="match status" value="1"/>
</dbReference>
<dbReference type="Gene3D" id="3.50.7.10">
    <property type="entry name" value="GroEL"/>
    <property type="match status" value="1"/>
</dbReference>
<dbReference type="Gene3D" id="1.10.560.10">
    <property type="entry name" value="GroEL-like equatorial domain"/>
    <property type="match status" value="1"/>
</dbReference>
<dbReference type="Gene3D" id="3.30.260.10">
    <property type="entry name" value="TCP-1-like chaperonin intermediate domain"/>
    <property type="match status" value="1"/>
</dbReference>
<dbReference type="HAMAP" id="MF_00600">
    <property type="entry name" value="CH60"/>
    <property type="match status" value="1"/>
</dbReference>
<dbReference type="InterPro" id="IPR001844">
    <property type="entry name" value="Cpn60/GroEL"/>
</dbReference>
<dbReference type="InterPro" id="IPR002423">
    <property type="entry name" value="Cpn60/GroEL/TCP-1"/>
</dbReference>
<dbReference type="InterPro" id="IPR027409">
    <property type="entry name" value="GroEL-like_apical_dom_sf"/>
</dbReference>
<dbReference type="InterPro" id="IPR027413">
    <property type="entry name" value="GROEL-like_equatorial_sf"/>
</dbReference>
<dbReference type="InterPro" id="IPR027410">
    <property type="entry name" value="TCP-1-like_intermed_sf"/>
</dbReference>
<dbReference type="NCBIfam" id="TIGR02348">
    <property type="entry name" value="GroEL"/>
    <property type="match status" value="1"/>
</dbReference>
<dbReference type="NCBIfam" id="NF000592">
    <property type="entry name" value="PRK00013.1"/>
    <property type="match status" value="1"/>
</dbReference>
<dbReference type="NCBIfam" id="NF009487">
    <property type="entry name" value="PRK12849.1"/>
    <property type="match status" value="1"/>
</dbReference>
<dbReference type="NCBIfam" id="NF009488">
    <property type="entry name" value="PRK12850.1"/>
    <property type="match status" value="1"/>
</dbReference>
<dbReference type="NCBIfam" id="NF009489">
    <property type="entry name" value="PRK12851.1"/>
    <property type="match status" value="1"/>
</dbReference>
<dbReference type="PANTHER" id="PTHR45633">
    <property type="entry name" value="60 KDA HEAT SHOCK PROTEIN, MITOCHONDRIAL"/>
    <property type="match status" value="1"/>
</dbReference>
<dbReference type="Pfam" id="PF00118">
    <property type="entry name" value="Cpn60_TCP1"/>
    <property type="match status" value="1"/>
</dbReference>
<dbReference type="PRINTS" id="PR00298">
    <property type="entry name" value="CHAPERONIN60"/>
</dbReference>
<dbReference type="SUPFAM" id="SSF52029">
    <property type="entry name" value="GroEL apical domain-like"/>
    <property type="match status" value="1"/>
</dbReference>
<dbReference type="SUPFAM" id="SSF48592">
    <property type="entry name" value="GroEL equatorial domain-like"/>
    <property type="match status" value="1"/>
</dbReference>
<dbReference type="SUPFAM" id="SSF54849">
    <property type="entry name" value="GroEL-intermediate domain like"/>
    <property type="match status" value="1"/>
</dbReference>
<organism>
    <name type="scientific">Schizosaccharomyces pombe (strain 972 / ATCC 24843)</name>
    <name type="common">Fission yeast</name>
    <dbReference type="NCBI Taxonomy" id="284812"/>
    <lineage>
        <taxon>Eukaryota</taxon>
        <taxon>Fungi</taxon>
        <taxon>Dikarya</taxon>
        <taxon>Ascomycota</taxon>
        <taxon>Taphrinomycotina</taxon>
        <taxon>Schizosaccharomycetes</taxon>
        <taxon>Schizosaccharomycetales</taxon>
        <taxon>Schizosaccharomycetaceae</taxon>
        <taxon>Schizosaccharomyces</taxon>
    </lineage>
</organism>
<protein>
    <recommendedName>
        <fullName>Heat shock protein 60, mitochondrial</fullName>
        <shortName>HSP60</shortName>
    </recommendedName>
</protein>
<reference key="1">
    <citation type="journal article" date="1995" name="Gene">
        <title>Cloning and characterization of the mitochondrial HSP60-encoding gene of Schizosaccharomyces pombe.</title>
        <authorList>
            <person name="Yoshida H."/>
            <person name="Yanagi H."/>
            <person name="Yura T."/>
        </authorList>
    </citation>
    <scope>NUCLEOTIDE SEQUENCE [GENOMIC DNA]</scope>
    <source>
        <strain>972 / HM123</strain>
    </source>
</reference>
<reference key="2">
    <citation type="journal article" date="2002" name="Nature">
        <title>The genome sequence of Schizosaccharomyces pombe.</title>
        <authorList>
            <person name="Wood V."/>
            <person name="Gwilliam R."/>
            <person name="Rajandream M.A."/>
            <person name="Lyne M.H."/>
            <person name="Lyne R."/>
            <person name="Stewart A."/>
            <person name="Sgouros J.G."/>
            <person name="Peat N."/>
            <person name="Hayles J."/>
            <person name="Baker S.G."/>
            <person name="Basham D."/>
            <person name="Bowman S."/>
            <person name="Brooks K."/>
            <person name="Brown D."/>
            <person name="Brown S."/>
            <person name="Chillingworth T."/>
            <person name="Churcher C.M."/>
            <person name="Collins M."/>
            <person name="Connor R."/>
            <person name="Cronin A."/>
            <person name="Davis P."/>
            <person name="Feltwell T."/>
            <person name="Fraser A."/>
            <person name="Gentles S."/>
            <person name="Goble A."/>
            <person name="Hamlin N."/>
            <person name="Harris D.E."/>
            <person name="Hidalgo J."/>
            <person name="Hodgson G."/>
            <person name="Holroyd S."/>
            <person name="Hornsby T."/>
            <person name="Howarth S."/>
            <person name="Huckle E.J."/>
            <person name="Hunt S."/>
            <person name="Jagels K."/>
            <person name="James K.D."/>
            <person name="Jones L."/>
            <person name="Jones M."/>
            <person name="Leather S."/>
            <person name="McDonald S."/>
            <person name="McLean J."/>
            <person name="Mooney P."/>
            <person name="Moule S."/>
            <person name="Mungall K.L."/>
            <person name="Murphy L.D."/>
            <person name="Niblett D."/>
            <person name="Odell C."/>
            <person name="Oliver K."/>
            <person name="O'Neil S."/>
            <person name="Pearson D."/>
            <person name="Quail M.A."/>
            <person name="Rabbinowitsch E."/>
            <person name="Rutherford K.M."/>
            <person name="Rutter S."/>
            <person name="Saunders D."/>
            <person name="Seeger K."/>
            <person name="Sharp S."/>
            <person name="Skelton J."/>
            <person name="Simmonds M.N."/>
            <person name="Squares R."/>
            <person name="Squares S."/>
            <person name="Stevens K."/>
            <person name="Taylor K."/>
            <person name="Taylor R.G."/>
            <person name="Tivey A."/>
            <person name="Walsh S.V."/>
            <person name="Warren T."/>
            <person name="Whitehead S."/>
            <person name="Woodward J.R."/>
            <person name="Volckaert G."/>
            <person name="Aert R."/>
            <person name="Robben J."/>
            <person name="Grymonprez B."/>
            <person name="Weltjens I."/>
            <person name="Vanstreels E."/>
            <person name="Rieger M."/>
            <person name="Schaefer M."/>
            <person name="Mueller-Auer S."/>
            <person name="Gabel C."/>
            <person name="Fuchs M."/>
            <person name="Duesterhoeft A."/>
            <person name="Fritzc C."/>
            <person name="Holzer E."/>
            <person name="Moestl D."/>
            <person name="Hilbert H."/>
            <person name="Borzym K."/>
            <person name="Langer I."/>
            <person name="Beck A."/>
            <person name="Lehrach H."/>
            <person name="Reinhardt R."/>
            <person name="Pohl T.M."/>
            <person name="Eger P."/>
            <person name="Zimmermann W."/>
            <person name="Wedler H."/>
            <person name="Wambutt R."/>
            <person name="Purnelle B."/>
            <person name="Goffeau A."/>
            <person name="Cadieu E."/>
            <person name="Dreano S."/>
            <person name="Gloux S."/>
            <person name="Lelaure V."/>
            <person name="Mottier S."/>
            <person name="Galibert F."/>
            <person name="Aves S.J."/>
            <person name="Xiang Z."/>
            <person name="Hunt C."/>
            <person name="Moore K."/>
            <person name="Hurst S.M."/>
            <person name="Lucas M."/>
            <person name="Rochet M."/>
            <person name="Gaillardin C."/>
            <person name="Tallada V.A."/>
            <person name="Garzon A."/>
            <person name="Thode G."/>
            <person name="Daga R.R."/>
            <person name="Cruzado L."/>
            <person name="Jimenez J."/>
            <person name="Sanchez M."/>
            <person name="del Rey F."/>
            <person name="Benito J."/>
            <person name="Dominguez A."/>
            <person name="Revuelta J.L."/>
            <person name="Moreno S."/>
            <person name="Armstrong J."/>
            <person name="Forsburg S.L."/>
            <person name="Cerutti L."/>
            <person name="Lowe T."/>
            <person name="McCombie W.R."/>
            <person name="Paulsen I."/>
            <person name="Potashkin J."/>
            <person name="Shpakovski G.V."/>
            <person name="Ussery D."/>
            <person name="Barrell B.G."/>
            <person name="Nurse P."/>
        </authorList>
    </citation>
    <scope>NUCLEOTIDE SEQUENCE [LARGE SCALE GENOMIC DNA]</scope>
    <source>
        <strain>972 / ATCC 24843</strain>
    </source>
</reference>
<reference key="3">
    <citation type="journal article" date="2008" name="J. Proteome Res.">
        <title>Phosphoproteome analysis of fission yeast.</title>
        <authorList>
            <person name="Wilson-Grady J.T."/>
            <person name="Villen J."/>
            <person name="Gygi S.P."/>
        </authorList>
    </citation>
    <scope>PHOSPHORYLATION [LARGE SCALE ANALYSIS] AT SER-77 AND SER-92</scope>
    <scope>IDENTIFICATION BY MASS SPECTROMETRY</scope>
</reference>
<name>HSP60_SCHPO</name>
<keyword id="KW-0067">ATP-binding</keyword>
<keyword id="KW-0143">Chaperone</keyword>
<keyword id="KW-0496">Mitochondrion</keyword>
<keyword id="KW-0547">Nucleotide-binding</keyword>
<keyword id="KW-0597">Phosphoprotein</keyword>
<keyword id="KW-1185">Reference proteome</keyword>
<keyword id="KW-0346">Stress response</keyword>
<keyword id="KW-0809">Transit peptide</keyword>
<feature type="transit peptide" description="Mitochondrion" evidence="1">
    <location>
        <begin position="1"/>
        <end position="35"/>
    </location>
</feature>
<feature type="chain" id="PRO_0000005043" description="Heat shock protein 60, mitochondrial">
    <location>
        <begin position="36"/>
        <end position="582"/>
    </location>
</feature>
<feature type="region of interest" description="Disordered" evidence="2">
    <location>
        <begin position="561"/>
        <end position="582"/>
    </location>
</feature>
<feature type="compositionally biased region" description="Gly residues" evidence="2">
    <location>
        <begin position="570"/>
        <end position="582"/>
    </location>
</feature>
<feature type="modified residue" description="Phosphoserine" evidence="3">
    <location>
        <position position="77"/>
    </location>
</feature>
<feature type="modified residue" description="Phosphoserine" evidence="3">
    <location>
        <position position="92"/>
    </location>
</feature>
<feature type="sequence conflict" description="In Ref. 1; BAA09171." evidence="4" ref="1">
    <original>Y</original>
    <variation>S</variation>
    <location>
        <position position="392"/>
    </location>
</feature>
<feature type="sequence conflict" description="In Ref. 1; BAA09171." evidence="4" ref="1">
    <original>G</original>
    <variation>A</variation>
    <location>
        <position position="415"/>
    </location>
</feature>
<proteinExistence type="evidence at protein level"/>
<sequence>MVSFLSSSVSRLPLRIAGRRIPGRFAVPQVRTYAKDLKFGVDARASLLTGVDTLARAVSVTLGPKGRNVLIDQPFGSPKITKDGVTVARSVSLKDKFENLGARLVQDVASKTNEVAGDGTTTATVLTRAIFSETVRNVAAGCNPMDLRRGIQLAVDNVVEFLQANKRDITTSEEISQVATISANGDTHIGELLAKAMERVGKEGVITVKEGRTISDELEVTEGMKFDRGYISPYFITDVKSQKVEFENPLILLSEKKVSAVQDILPSLELAAQQRRPLVIIAEDVDGEALAACILNKLRGQLQVVAIKAPGFGDNRRNMLGDLAVLTDSAVFNDEIDVSIEKAQPHHLGSCGSVTVTKEDTIIMKGAGDHVKVNDRCEQIRGVMADPNLTEYEKEKLQERLAKLSGGIAVIKVGGSSEVEVNEKKDRIVDALNAVKAAVSEGVLPGAGTSFVKASLRLGDIPTNNFDQKLGVEIVRKAITRPAQTILENAGLEGNLIVGKLKELYGKEFNIGYDIAKDRFVDLNEIGVLDPLKVVRTGLVDASGVASLMGTTECAIVDAPEESKAPAGPPGMGGMGGMPGMM</sequence>
<accession>Q09864</accession>
<accession>Q10285</accession>
<evidence type="ECO:0000255" key="1"/>
<evidence type="ECO:0000256" key="2">
    <source>
        <dbReference type="SAM" id="MobiDB-lite"/>
    </source>
</evidence>
<evidence type="ECO:0000269" key="3">
    <source>
    </source>
</evidence>
<evidence type="ECO:0000305" key="4"/>
<gene>
    <name type="primary">hsp60</name>
    <name type="synonym">mcp60</name>
    <name type="ORF">SPAC12G12.04</name>
</gene>
<comment type="function">
    <text>May participate in assembly and/or disassembly of proteins imported into the mitochondrion. HSP60 are ATPases and have affinity for unfolded proteins.</text>
</comment>
<comment type="subcellular location">
    <subcellularLocation>
        <location>Mitochondrion</location>
    </subcellularLocation>
</comment>
<comment type="similarity">
    <text evidence="4">Belongs to the chaperonin (HSP60) family.</text>
</comment>